<reference key="1">
    <citation type="journal article" date="2002" name="DNA Res.">
        <title>Complete genomic sequence of nitrogen-fixing symbiotic bacterium Bradyrhizobium japonicum USDA110.</title>
        <authorList>
            <person name="Kaneko T."/>
            <person name="Nakamura Y."/>
            <person name="Sato S."/>
            <person name="Minamisawa K."/>
            <person name="Uchiumi T."/>
            <person name="Sasamoto S."/>
            <person name="Watanabe A."/>
            <person name="Idesawa K."/>
            <person name="Iriguchi M."/>
            <person name="Kawashima K."/>
            <person name="Kohara M."/>
            <person name="Matsumoto M."/>
            <person name="Shimpo S."/>
            <person name="Tsuruoka H."/>
            <person name="Wada T."/>
            <person name="Yamada M."/>
            <person name="Tabata S."/>
        </authorList>
    </citation>
    <scope>NUCLEOTIDE SEQUENCE [LARGE SCALE GENOMIC DNA]</scope>
    <source>
        <strain>JCM 10833 / BCRC 13528 / IAM 13628 / NBRC 14792 / USDA 110</strain>
    </source>
</reference>
<evidence type="ECO:0000255" key="1">
    <source>
        <dbReference type="HAMAP-Rule" id="MF_00911"/>
    </source>
</evidence>
<evidence type="ECO:0000255" key="2">
    <source>
        <dbReference type="PROSITE-ProRule" id="PRU01115"/>
    </source>
</evidence>
<protein>
    <recommendedName>
        <fullName evidence="1">Cell division protein FtsQ</fullName>
    </recommendedName>
</protein>
<proteinExistence type="inferred from homology"/>
<organism>
    <name type="scientific">Bradyrhizobium diazoefficiens (strain JCM 10833 / BCRC 13528 / IAM 13628 / NBRC 14792 / USDA 110)</name>
    <dbReference type="NCBI Taxonomy" id="224911"/>
    <lineage>
        <taxon>Bacteria</taxon>
        <taxon>Pseudomonadati</taxon>
        <taxon>Pseudomonadota</taxon>
        <taxon>Alphaproteobacteria</taxon>
        <taxon>Hyphomicrobiales</taxon>
        <taxon>Nitrobacteraceae</taxon>
        <taxon>Bradyrhizobium</taxon>
    </lineage>
</organism>
<gene>
    <name evidence="1" type="primary">ftsQ</name>
    <name type="ordered locus">bll6598</name>
</gene>
<comment type="function">
    <text evidence="1">Essential cell division protein.</text>
</comment>
<comment type="subcellular location">
    <subcellularLocation>
        <location evidence="1">Cell inner membrane</location>
        <topology evidence="1">Single-pass type II membrane protein</topology>
    </subcellularLocation>
    <text evidence="1">Localizes to the division septum.</text>
</comment>
<comment type="similarity">
    <text evidence="1">Belongs to the FtsQ/DivIB family. FtsQ subfamily.</text>
</comment>
<sequence>MDGAGSLTRSFFRSLRPQADLKAAAIGAVVLLREWVQDKRRERLHAARAAAKDKIKAKAVVEREPPPRVVALVERYLPRRVGISMTVLLLIGSCGFGIVKGGHLQDFVTAISDARNAMANSAGFRITSVVINGRKQLTQDEILAIGGVSGRSSLLFLDADAVRDKLKANPWIADATVLKLYPGQLMIELTERKAFALWQEAGRLSVIADDGAVLEPYVSRRFLSLPLVVGKGADTQARDFLALLARYPQVNSITKAAIFVGERRWNLRLKDGLDIRLPEQDVGNALAMLSRLDKEDKLFSRDIVAVDMRLPDRLVVQLSEDAAKAREEQFKDKKKKKAGDAA</sequence>
<name>FTSQ_BRADU</name>
<accession>Q89FV1</accession>
<dbReference type="EMBL" id="BA000040">
    <property type="protein sequence ID" value="BAC51863.1"/>
    <property type="molecule type" value="Genomic_DNA"/>
</dbReference>
<dbReference type="RefSeq" id="NP_773238.1">
    <property type="nucleotide sequence ID" value="NC_004463.1"/>
</dbReference>
<dbReference type="RefSeq" id="WP_011089338.1">
    <property type="nucleotide sequence ID" value="NC_004463.1"/>
</dbReference>
<dbReference type="SMR" id="Q89FV1"/>
<dbReference type="FunCoup" id="Q89FV1">
    <property type="interactions" value="69"/>
</dbReference>
<dbReference type="STRING" id="224911.AAV28_30570"/>
<dbReference type="EnsemblBacteria" id="BAC51863">
    <property type="protein sequence ID" value="BAC51863"/>
    <property type="gene ID" value="BAC51863"/>
</dbReference>
<dbReference type="GeneID" id="46493570"/>
<dbReference type="KEGG" id="bja:bll6598"/>
<dbReference type="PATRIC" id="fig|224911.44.peg.6610"/>
<dbReference type="eggNOG" id="COG1589">
    <property type="taxonomic scope" value="Bacteria"/>
</dbReference>
<dbReference type="HOGENOM" id="CLU_061141_2_0_5"/>
<dbReference type="InParanoid" id="Q89FV1"/>
<dbReference type="OrthoDB" id="9783091at2"/>
<dbReference type="PhylomeDB" id="Q89FV1"/>
<dbReference type="Proteomes" id="UP000002526">
    <property type="component" value="Chromosome"/>
</dbReference>
<dbReference type="GO" id="GO:0032153">
    <property type="term" value="C:cell division site"/>
    <property type="evidence" value="ECO:0000318"/>
    <property type="project" value="GO_Central"/>
</dbReference>
<dbReference type="GO" id="GO:1990587">
    <property type="term" value="C:FtsQBL complex"/>
    <property type="evidence" value="ECO:0000318"/>
    <property type="project" value="GO_Central"/>
</dbReference>
<dbReference type="GO" id="GO:0005886">
    <property type="term" value="C:plasma membrane"/>
    <property type="evidence" value="ECO:0000318"/>
    <property type="project" value="GO_Central"/>
</dbReference>
<dbReference type="GO" id="GO:0000917">
    <property type="term" value="P:division septum assembly"/>
    <property type="evidence" value="ECO:0000318"/>
    <property type="project" value="GO_Central"/>
</dbReference>
<dbReference type="GO" id="GO:0043093">
    <property type="term" value="P:FtsZ-dependent cytokinesis"/>
    <property type="evidence" value="ECO:0000318"/>
    <property type="project" value="GO_Central"/>
</dbReference>
<dbReference type="Gene3D" id="3.40.50.11690">
    <property type="entry name" value="Cell division protein FtsQ/DivIB"/>
    <property type="match status" value="1"/>
</dbReference>
<dbReference type="Gene3D" id="3.10.20.310">
    <property type="entry name" value="membrane protein fhac"/>
    <property type="match status" value="1"/>
</dbReference>
<dbReference type="HAMAP" id="MF_00911">
    <property type="entry name" value="FtsQ_subfam"/>
    <property type="match status" value="1"/>
</dbReference>
<dbReference type="InterPro" id="IPR005548">
    <property type="entry name" value="Cell_div_FtsQ/DivIB_C"/>
</dbReference>
<dbReference type="InterPro" id="IPR026579">
    <property type="entry name" value="FtsQ"/>
</dbReference>
<dbReference type="InterPro" id="IPR045335">
    <property type="entry name" value="FtsQ_C_sf"/>
</dbReference>
<dbReference type="InterPro" id="IPR034746">
    <property type="entry name" value="POTRA"/>
</dbReference>
<dbReference type="InterPro" id="IPR013685">
    <property type="entry name" value="POTRA_FtsQ_type"/>
</dbReference>
<dbReference type="PANTHER" id="PTHR35851">
    <property type="entry name" value="CELL DIVISION PROTEIN FTSQ"/>
    <property type="match status" value="1"/>
</dbReference>
<dbReference type="PANTHER" id="PTHR35851:SF1">
    <property type="entry name" value="CELL DIVISION PROTEIN FTSQ"/>
    <property type="match status" value="1"/>
</dbReference>
<dbReference type="Pfam" id="PF03799">
    <property type="entry name" value="FtsQ_DivIB_C"/>
    <property type="match status" value="1"/>
</dbReference>
<dbReference type="Pfam" id="PF08478">
    <property type="entry name" value="POTRA_1"/>
    <property type="match status" value="1"/>
</dbReference>
<dbReference type="PROSITE" id="PS51779">
    <property type="entry name" value="POTRA"/>
    <property type="match status" value="1"/>
</dbReference>
<keyword id="KW-0131">Cell cycle</keyword>
<keyword id="KW-0132">Cell division</keyword>
<keyword id="KW-0997">Cell inner membrane</keyword>
<keyword id="KW-1003">Cell membrane</keyword>
<keyword id="KW-0472">Membrane</keyword>
<keyword id="KW-1185">Reference proteome</keyword>
<keyword id="KW-0812">Transmembrane</keyword>
<keyword id="KW-1133">Transmembrane helix</keyword>
<feature type="chain" id="PRO_0000414661" description="Cell division protein FtsQ">
    <location>
        <begin position="1"/>
        <end position="342"/>
    </location>
</feature>
<feature type="topological domain" description="Cytoplasmic" evidence="1">
    <location>
        <begin position="1"/>
        <end position="80"/>
    </location>
</feature>
<feature type="transmembrane region" description="Helical" evidence="1">
    <location>
        <begin position="81"/>
        <end position="99"/>
    </location>
</feature>
<feature type="topological domain" description="Periplasmic" evidence="1">
    <location>
        <begin position="100"/>
        <end position="342"/>
    </location>
</feature>
<feature type="domain" description="POTRA" evidence="2">
    <location>
        <begin position="124"/>
        <end position="192"/>
    </location>
</feature>